<reference key="1">
    <citation type="submission" date="2008-08" db="EMBL/GenBank/DDBJ databases">
        <title>Complete sequence of Anaeromyxobacter sp. K.</title>
        <authorList>
            <consortium name="US DOE Joint Genome Institute"/>
            <person name="Lucas S."/>
            <person name="Copeland A."/>
            <person name="Lapidus A."/>
            <person name="Glavina del Rio T."/>
            <person name="Dalin E."/>
            <person name="Tice H."/>
            <person name="Bruce D."/>
            <person name="Goodwin L."/>
            <person name="Pitluck S."/>
            <person name="Saunders E."/>
            <person name="Brettin T."/>
            <person name="Detter J.C."/>
            <person name="Han C."/>
            <person name="Larimer F."/>
            <person name="Land M."/>
            <person name="Hauser L."/>
            <person name="Kyrpides N."/>
            <person name="Ovchinnikiva G."/>
            <person name="Beliaev A."/>
        </authorList>
    </citation>
    <scope>NUCLEOTIDE SEQUENCE [LARGE SCALE GENOMIC DNA]</scope>
    <source>
        <strain>K</strain>
    </source>
</reference>
<keyword id="KW-0687">Ribonucleoprotein</keyword>
<keyword id="KW-0689">Ribosomal protein</keyword>
<keyword id="KW-0694">RNA-binding</keyword>
<keyword id="KW-0699">rRNA-binding</keyword>
<dbReference type="EMBL" id="CP001131">
    <property type="protein sequence ID" value="ACG73180.1"/>
    <property type="molecule type" value="Genomic_DNA"/>
</dbReference>
<dbReference type="RefSeq" id="WP_012525985.1">
    <property type="nucleotide sequence ID" value="NC_011145.1"/>
</dbReference>
<dbReference type="SMR" id="B4UBB8"/>
<dbReference type="KEGG" id="ank:AnaeK_1952"/>
<dbReference type="HOGENOM" id="CLU_055188_4_2_7"/>
<dbReference type="OrthoDB" id="9810293at2"/>
<dbReference type="Proteomes" id="UP000001871">
    <property type="component" value="Chromosome"/>
</dbReference>
<dbReference type="GO" id="GO:0022625">
    <property type="term" value="C:cytosolic large ribosomal subunit"/>
    <property type="evidence" value="ECO:0007669"/>
    <property type="project" value="TreeGrafter"/>
</dbReference>
<dbReference type="GO" id="GO:0019843">
    <property type="term" value="F:rRNA binding"/>
    <property type="evidence" value="ECO:0007669"/>
    <property type="project" value="UniProtKB-UniRule"/>
</dbReference>
<dbReference type="GO" id="GO:0003735">
    <property type="term" value="F:structural constituent of ribosome"/>
    <property type="evidence" value="ECO:0007669"/>
    <property type="project" value="InterPro"/>
</dbReference>
<dbReference type="GO" id="GO:0006412">
    <property type="term" value="P:translation"/>
    <property type="evidence" value="ECO:0007669"/>
    <property type="project" value="UniProtKB-UniRule"/>
</dbReference>
<dbReference type="Gene3D" id="3.100.10.10">
    <property type="match status" value="1"/>
</dbReference>
<dbReference type="HAMAP" id="MF_01341">
    <property type="entry name" value="Ribosomal_uL15"/>
    <property type="match status" value="1"/>
</dbReference>
<dbReference type="InterPro" id="IPR030878">
    <property type="entry name" value="Ribosomal_uL15"/>
</dbReference>
<dbReference type="InterPro" id="IPR021131">
    <property type="entry name" value="Ribosomal_uL15/eL18"/>
</dbReference>
<dbReference type="InterPro" id="IPR036227">
    <property type="entry name" value="Ribosomal_uL15/eL18_sf"/>
</dbReference>
<dbReference type="InterPro" id="IPR005749">
    <property type="entry name" value="Ribosomal_uL15_bac-type"/>
</dbReference>
<dbReference type="NCBIfam" id="TIGR01071">
    <property type="entry name" value="rplO_bact"/>
    <property type="match status" value="1"/>
</dbReference>
<dbReference type="PANTHER" id="PTHR12934">
    <property type="entry name" value="50S RIBOSOMAL PROTEIN L15"/>
    <property type="match status" value="1"/>
</dbReference>
<dbReference type="PANTHER" id="PTHR12934:SF11">
    <property type="entry name" value="LARGE RIBOSOMAL SUBUNIT PROTEIN UL15M"/>
    <property type="match status" value="1"/>
</dbReference>
<dbReference type="Pfam" id="PF00828">
    <property type="entry name" value="Ribosomal_L27A"/>
    <property type="match status" value="1"/>
</dbReference>
<dbReference type="SUPFAM" id="SSF52080">
    <property type="entry name" value="Ribosomal proteins L15p and L18e"/>
    <property type="match status" value="1"/>
</dbReference>
<evidence type="ECO:0000255" key="1">
    <source>
        <dbReference type="HAMAP-Rule" id="MF_01341"/>
    </source>
</evidence>
<evidence type="ECO:0000256" key="2">
    <source>
        <dbReference type="SAM" id="MobiDB-lite"/>
    </source>
</evidence>
<evidence type="ECO:0000305" key="3"/>
<organism>
    <name type="scientific">Anaeromyxobacter sp. (strain K)</name>
    <dbReference type="NCBI Taxonomy" id="447217"/>
    <lineage>
        <taxon>Bacteria</taxon>
        <taxon>Pseudomonadati</taxon>
        <taxon>Myxococcota</taxon>
        <taxon>Myxococcia</taxon>
        <taxon>Myxococcales</taxon>
        <taxon>Cystobacterineae</taxon>
        <taxon>Anaeromyxobacteraceae</taxon>
        <taxon>Anaeromyxobacter</taxon>
    </lineage>
</organism>
<protein>
    <recommendedName>
        <fullName evidence="1">Large ribosomal subunit protein uL15</fullName>
    </recommendedName>
    <alternativeName>
        <fullName evidence="3">50S ribosomal protein L15</fullName>
    </alternativeName>
</protein>
<comment type="function">
    <text evidence="1">Binds to the 23S rRNA.</text>
</comment>
<comment type="subunit">
    <text evidence="1">Part of the 50S ribosomal subunit.</text>
</comment>
<comment type="similarity">
    <text evidence="1">Belongs to the universal ribosomal protein uL15 family.</text>
</comment>
<gene>
    <name evidence="1" type="primary">rplO</name>
    <name type="ordered locus">AnaeK_1952</name>
</gene>
<name>RL15_ANASK</name>
<feature type="chain" id="PRO_1000142769" description="Large ribosomal subunit protein uL15">
    <location>
        <begin position="1"/>
        <end position="165"/>
    </location>
</feature>
<feature type="region of interest" description="Disordered" evidence="2">
    <location>
        <begin position="1"/>
        <end position="44"/>
    </location>
</feature>
<feature type="compositionally biased region" description="Gly residues" evidence="2">
    <location>
        <begin position="21"/>
        <end position="37"/>
    </location>
</feature>
<accession>B4UBB8</accession>
<sequence length="165" mass="17252">MSLNQLKAPRGANRAKKRVGRGQGSGLGKTAGRGGKGQKARSGNMHFEGFEGGQMPLQRRLPKFGFHNIFRRELEEVKVGDLQGLSGVVDPAALKSAGLVRGNRDGVVVLAGGELSSALTVKVHRVTAGARATIEKAGGKVELIPAPQTMHQKAKAAKKAAAQAK</sequence>
<proteinExistence type="inferred from homology"/>